<evidence type="ECO:0000250" key="1">
    <source>
        <dbReference type="UniProtKB" id="P00698"/>
    </source>
</evidence>
<evidence type="ECO:0000255" key="2"/>
<evidence type="ECO:0000255" key="3">
    <source>
        <dbReference type="PROSITE-ProRule" id="PRU00680"/>
    </source>
</evidence>
<evidence type="ECO:0000269" key="4">
    <source>
    </source>
</evidence>
<evidence type="ECO:0000305" key="5"/>
<evidence type="ECO:0000312" key="6">
    <source>
        <dbReference type="EMBL" id="BAL03622.1"/>
    </source>
</evidence>
<feature type="signal peptide" evidence="2">
    <location>
        <begin position="1"/>
        <end position="18"/>
    </location>
</feature>
<feature type="chain" id="PRO_5000795993" description="Lysozyme C" evidence="2">
    <location>
        <begin position="19"/>
        <end position="147"/>
    </location>
</feature>
<feature type="domain" description="C-type lysozyme" evidence="3">
    <location>
        <begin position="19"/>
        <end position="147"/>
    </location>
</feature>
<feature type="active site" evidence="1 3">
    <location>
        <position position="53"/>
    </location>
</feature>
<feature type="active site" evidence="1 3">
    <location>
        <position position="70"/>
    </location>
</feature>
<feature type="binding site" evidence="1">
    <location>
        <position position="119"/>
    </location>
    <ligand>
        <name>substrate</name>
    </ligand>
</feature>
<feature type="disulfide bond" evidence="1 3">
    <location>
        <begin position="24"/>
        <end position="145"/>
    </location>
</feature>
<feature type="disulfide bond" evidence="1 3">
    <location>
        <begin position="48"/>
        <end position="133"/>
    </location>
</feature>
<feature type="disulfide bond" evidence="1 3">
    <location>
        <begin position="82"/>
        <end position="98"/>
    </location>
</feature>
<feature type="disulfide bond" evidence="1 3">
    <location>
        <begin position="94"/>
        <end position="112"/>
    </location>
</feature>
<keyword id="KW-0929">Antimicrobial</keyword>
<keyword id="KW-0081">Bacteriolytic enzyme</keyword>
<keyword id="KW-1015">Disulfide bond</keyword>
<keyword id="KW-0326">Glycosidase</keyword>
<keyword id="KW-0378">Hydrolase</keyword>
<keyword id="KW-0964">Secreted</keyword>
<keyword id="KW-0732">Signal</keyword>
<proteinExistence type="evidence at transcript level"/>
<protein>
    <recommendedName>
        <fullName evidence="6">Lysozyme C</fullName>
        <ecNumber evidence="1">3.2.1.17</ecNumber>
    </recommendedName>
    <alternativeName>
        <fullName evidence="1">1,4-beta-N-acetylmuramidase C</fullName>
    </alternativeName>
</protein>
<name>LYSC_DRONO</name>
<organism>
    <name type="scientific">Dromaius novaehollandiae</name>
    <name type="common">Emu</name>
    <dbReference type="NCBI Taxonomy" id="8790"/>
    <lineage>
        <taxon>Eukaryota</taxon>
        <taxon>Metazoa</taxon>
        <taxon>Chordata</taxon>
        <taxon>Craniata</taxon>
        <taxon>Vertebrata</taxon>
        <taxon>Euteleostomi</taxon>
        <taxon>Archelosauria</taxon>
        <taxon>Archosauria</taxon>
        <taxon>Dinosauria</taxon>
        <taxon>Saurischia</taxon>
        <taxon>Theropoda</taxon>
        <taxon>Coelurosauria</taxon>
        <taxon>Aves</taxon>
        <taxon>Palaeognathae</taxon>
        <taxon>Casuariiformes</taxon>
        <taxon>Dromaiidae</taxon>
        <taxon>Dromaius</taxon>
    </lineage>
</organism>
<accession>G3XDT7</accession>
<comment type="function">
    <text evidence="3 4">Lysozymes have primarily a bacteriolytic function; those in tissues and body fluids are associated with the monocyte-macrophage system and enhance the activity of immunoagents. Has bacteriolytic activity against M.luteus.</text>
</comment>
<comment type="catalytic activity">
    <reaction evidence="1">
        <text>Hydrolysis of (1-&gt;4)-beta-linkages between N-acetylmuramic acid and N-acetyl-D-glucosamine residues in a peptidoglycan and between N-acetyl-D-glucosamine residues in chitodextrins.</text>
        <dbReference type="EC" id="3.2.1.17"/>
    </reaction>
</comment>
<comment type="subunit">
    <text evidence="1">Monomer.</text>
</comment>
<comment type="subcellular location">
    <subcellularLocation>
        <location evidence="1">Secreted</location>
    </subcellularLocation>
</comment>
<comment type="tissue specificity">
    <text evidence="4">Expressed in liver and ovary. Not expressed in bone marrow, lung, spleen, intestine or oviduct.</text>
</comment>
<comment type="miscellaneous">
    <text evidence="1">Lysozyme C is capable of both hydrolysis and transglycosylation; it also shows a slight esterase activity. It acts rapidly on both peptide-substituted and unsubstituted peptidoglycan, and slowly on chitin oligosaccharides (By similarity).</text>
</comment>
<comment type="similarity">
    <text evidence="3">Belongs to the glycosyl hydrolase 22 family.</text>
</comment>
<reference evidence="5 6" key="1">
    <citation type="journal article" date="2012" name="Gene">
        <title>Molecular characterization of goose- and chicken-type lysozymes in emu (Dromaius novaehollandiae): evidence for extremely low lysozyme levels in emu egg white.</title>
        <authorList>
            <person name="Maehashi K."/>
            <person name="Matano M."/>
            <person name="Irisawa T."/>
            <person name="Uchino M."/>
            <person name="Kashiwagi Y."/>
            <person name="Watanabe T."/>
        </authorList>
    </citation>
    <scope>NUCLEOTIDE SEQUENCE [GENOMIC DNA / MRNA]</scope>
    <scope>FUNCTION</scope>
    <scope>TISSUE SPECIFICITY</scope>
    <source>
        <tissue evidence="4">Muscle</tissue>
        <tissue evidence="6">Oviduct</tissue>
    </source>
</reference>
<dbReference type="EC" id="3.2.1.17" evidence="1"/>
<dbReference type="EMBL" id="AB513676">
    <property type="protein sequence ID" value="BAL03621.1"/>
    <property type="molecule type" value="Genomic_DNA"/>
</dbReference>
<dbReference type="EMBL" id="AB513854">
    <property type="protein sequence ID" value="BAL03622.1"/>
    <property type="molecule type" value="mRNA"/>
</dbReference>
<dbReference type="RefSeq" id="XP_025956123.1">
    <property type="nucleotide sequence ID" value="XM_026100338.2"/>
</dbReference>
<dbReference type="SMR" id="G3XDT7"/>
<dbReference type="CAZy" id="GH22">
    <property type="family name" value="Glycoside Hydrolase Family 22"/>
</dbReference>
<dbReference type="Ensembl" id="ENSDNVT00000022564.1">
    <property type="protein sequence ID" value="ENSDNVP00000018735.1"/>
    <property type="gene ID" value="ENSDNVG00000013082.1"/>
</dbReference>
<dbReference type="GeneID" id="112983315"/>
<dbReference type="Proteomes" id="UP000694423">
    <property type="component" value="Unplaced"/>
</dbReference>
<dbReference type="GO" id="GO:0005576">
    <property type="term" value="C:extracellular region"/>
    <property type="evidence" value="ECO:0007669"/>
    <property type="project" value="UniProtKB-SubCell"/>
</dbReference>
<dbReference type="GO" id="GO:0003796">
    <property type="term" value="F:lysozyme activity"/>
    <property type="evidence" value="ECO:0007669"/>
    <property type="project" value="UniProtKB-EC"/>
</dbReference>
<dbReference type="GO" id="GO:0050829">
    <property type="term" value="P:defense response to Gram-negative bacterium"/>
    <property type="evidence" value="ECO:0007669"/>
    <property type="project" value="TreeGrafter"/>
</dbReference>
<dbReference type="GO" id="GO:0050830">
    <property type="term" value="P:defense response to Gram-positive bacterium"/>
    <property type="evidence" value="ECO:0007669"/>
    <property type="project" value="TreeGrafter"/>
</dbReference>
<dbReference type="GO" id="GO:0031640">
    <property type="term" value="P:killing of cells of another organism"/>
    <property type="evidence" value="ECO:0007669"/>
    <property type="project" value="UniProtKB-KW"/>
</dbReference>
<dbReference type="CDD" id="cd16897">
    <property type="entry name" value="LYZ_C"/>
    <property type="match status" value="1"/>
</dbReference>
<dbReference type="FunFam" id="1.10.530.10:FF:000001">
    <property type="entry name" value="Lysozyme C"/>
    <property type="match status" value="1"/>
</dbReference>
<dbReference type="Gene3D" id="1.10.530.10">
    <property type="match status" value="1"/>
</dbReference>
<dbReference type="InterPro" id="IPR001916">
    <property type="entry name" value="Glyco_hydro_22"/>
</dbReference>
<dbReference type="InterPro" id="IPR019799">
    <property type="entry name" value="Glyco_hydro_22_CS"/>
</dbReference>
<dbReference type="InterPro" id="IPR000974">
    <property type="entry name" value="Glyco_hydro_22_lys"/>
</dbReference>
<dbReference type="InterPro" id="IPR023346">
    <property type="entry name" value="Lysozyme-like_dom_sf"/>
</dbReference>
<dbReference type="PANTHER" id="PTHR11407">
    <property type="entry name" value="LYSOZYME C"/>
    <property type="match status" value="1"/>
</dbReference>
<dbReference type="PANTHER" id="PTHR11407:SF28">
    <property type="entry name" value="LYSOZYME C"/>
    <property type="match status" value="1"/>
</dbReference>
<dbReference type="Pfam" id="PF00062">
    <property type="entry name" value="Lys"/>
    <property type="match status" value="1"/>
</dbReference>
<dbReference type="PRINTS" id="PR00137">
    <property type="entry name" value="LYSOZYME"/>
</dbReference>
<dbReference type="PRINTS" id="PR00135">
    <property type="entry name" value="LYZLACT"/>
</dbReference>
<dbReference type="SMART" id="SM00263">
    <property type="entry name" value="LYZ1"/>
    <property type="match status" value="1"/>
</dbReference>
<dbReference type="SUPFAM" id="SSF53955">
    <property type="entry name" value="Lysozyme-like"/>
    <property type="match status" value="1"/>
</dbReference>
<dbReference type="PROSITE" id="PS00128">
    <property type="entry name" value="GLYCOSYL_HYDROL_F22_1"/>
    <property type="match status" value="1"/>
</dbReference>
<dbReference type="PROSITE" id="PS51348">
    <property type="entry name" value="GLYCOSYL_HYDROL_F22_2"/>
    <property type="match status" value="1"/>
</dbReference>
<sequence length="147" mass="16443">MKFFLILGFCLLPLIAQGKVFQRCELAAAMKKHGLSNYRGYSLGHWVCAAKYESNFNTAAINRNRDGSSDYGILQINSRWWCNDGRTSGAKNLCKISCSALLSSDITASVNCAKRVVSDKNGMNAWVAWRNHCKGRDVSQWIRGCRV</sequence>